<dbReference type="EMBL" id="U89257">
    <property type="protein sequence ID" value="AAC49741.1"/>
    <property type="molecule type" value="mRNA"/>
</dbReference>
<dbReference type="PIR" id="T07728">
    <property type="entry name" value="T07728"/>
</dbReference>
<dbReference type="RefSeq" id="NP_001233991.1">
    <property type="nucleotide sequence ID" value="NM_001247062.2"/>
</dbReference>
<dbReference type="SMR" id="O04682"/>
<dbReference type="STRING" id="4081.O04682"/>
<dbReference type="PaxDb" id="4081-Solyc06g082590.1.1"/>
<dbReference type="EnsemblPlants" id="Solyc06g082590.1.1">
    <property type="protein sequence ID" value="Solyc06g082590.1.1.1"/>
    <property type="gene ID" value="Solyc06g082590.1"/>
</dbReference>
<dbReference type="GeneID" id="544043"/>
<dbReference type="Gramene" id="Solyc06g082590.1.1">
    <property type="protein sequence ID" value="Solyc06g082590.1.1.1"/>
    <property type="gene ID" value="Solyc06g082590.1"/>
</dbReference>
<dbReference type="KEGG" id="sly:544043"/>
<dbReference type="eggNOG" id="ENOG502R7AV">
    <property type="taxonomic scope" value="Eukaryota"/>
</dbReference>
<dbReference type="HOGENOM" id="CLU_062946_2_0_1"/>
<dbReference type="InParanoid" id="O04682"/>
<dbReference type="OMA" id="FAMTEKY"/>
<dbReference type="OrthoDB" id="682005at2759"/>
<dbReference type="PhylomeDB" id="O04682"/>
<dbReference type="Proteomes" id="UP000004994">
    <property type="component" value="Chromosome 6"/>
</dbReference>
<dbReference type="GO" id="GO:0005634">
    <property type="term" value="C:nucleus"/>
    <property type="evidence" value="ECO:0007669"/>
    <property type="project" value="UniProtKB-SubCell"/>
</dbReference>
<dbReference type="GO" id="GO:0003677">
    <property type="term" value="F:DNA binding"/>
    <property type="evidence" value="ECO:0007669"/>
    <property type="project" value="UniProtKB-KW"/>
</dbReference>
<dbReference type="GO" id="GO:0003700">
    <property type="term" value="F:DNA-binding transcription factor activity"/>
    <property type="evidence" value="ECO:0007669"/>
    <property type="project" value="InterPro"/>
</dbReference>
<dbReference type="GO" id="GO:0006952">
    <property type="term" value="P:defense response"/>
    <property type="evidence" value="ECO:0007669"/>
    <property type="project" value="UniProtKB-KW"/>
</dbReference>
<dbReference type="CDD" id="cd00018">
    <property type="entry name" value="AP2"/>
    <property type="match status" value="1"/>
</dbReference>
<dbReference type="FunFam" id="3.30.730.10:FF:000001">
    <property type="entry name" value="Ethylene-responsive transcription factor 2"/>
    <property type="match status" value="1"/>
</dbReference>
<dbReference type="Gene3D" id="3.30.730.10">
    <property type="entry name" value="AP2/ERF domain"/>
    <property type="match status" value="1"/>
</dbReference>
<dbReference type="InterPro" id="IPR017392">
    <property type="entry name" value="AP2/ERF-transcript_factor"/>
</dbReference>
<dbReference type="InterPro" id="IPR001471">
    <property type="entry name" value="AP2/ERF_dom"/>
</dbReference>
<dbReference type="InterPro" id="IPR036955">
    <property type="entry name" value="AP2/ERF_dom_sf"/>
</dbReference>
<dbReference type="InterPro" id="IPR050913">
    <property type="entry name" value="AP2/ERF_ERF_subfamily"/>
</dbReference>
<dbReference type="InterPro" id="IPR016177">
    <property type="entry name" value="DNA-bd_dom_sf"/>
</dbReference>
<dbReference type="PANTHER" id="PTHR31194:SF166">
    <property type="entry name" value="PATHOGENESIS-RELATED GENES TRANSCRIPTIONAL ACTIVATOR PTI6"/>
    <property type="match status" value="1"/>
</dbReference>
<dbReference type="PANTHER" id="PTHR31194">
    <property type="entry name" value="SHN SHINE , DNA BINDING / TRANSCRIPTION FACTOR"/>
    <property type="match status" value="1"/>
</dbReference>
<dbReference type="Pfam" id="PF00847">
    <property type="entry name" value="AP2"/>
    <property type="match status" value="1"/>
</dbReference>
<dbReference type="PIRSF" id="PIRSF038123">
    <property type="entry name" value="PTI6"/>
    <property type="match status" value="1"/>
</dbReference>
<dbReference type="PRINTS" id="PR00367">
    <property type="entry name" value="ETHRSPELEMNT"/>
</dbReference>
<dbReference type="SMART" id="SM00380">
    <property type="entry name" value="AP2"/>
    <property type="match status" value="1"/>
</dbReference>
<dbReference type="SUPFAM" id="SSF54171">
    <property type="entry name" value="DNA-binding domain"/>
    <property type="match status" value="1"/>
</dbReference>
<dbReference type="PROSITE" id="PS51032">
    <property type="entry name" value="AP2_ERF"/>
    <property type="match status" value="1"/>
</dbReference>
<protein>
    <recommendedName>
        <fullName>Pathogenesis-related genes transcriptional activator PTI6</fullName>
    </recommendedName>
    <alternativeName>
        <fullName>PTO-interacting protein 6</fullName>
    </alternativeName>
</protein>
<organism>
    <name type="scientific">Solanum lycopersicum</name>
    <name type="common">Tomato</name>
    <name type="synonym">Lycopersicon esculentum</name>
    <dbReference type="NCBI Taxonomy" id="4081"/>
    <lineage>
        <taxon>Eukaryota</taxon>
        <taxon>Viridiplantae</taxon>
        <taxon>Streptophyta</taxon>
        <taxon>Embryophyta</taxon>
        <taxon>Tracheophyta</taxon>
        <taxon>Spermatophyta</taxon>
        <taxon>Magnoliopsida</taxon>
        <taxon>eudicotyledons</taxon>
        <taxon>Gunneridae</taxon>
        <taxon>Pentapetalae</taxon>
        <taxon>asterids</taxon>
        <taxon>lamiids</taxon>
        <taxon>Solanales</taxon>
        <taxon>Solanaceae</taxon>
        <taxon>Solanoideae</taxon>
        <taxon>Solaneae</taxon>
        <taxon>Solanum</taxon>
        <taxon>Solanum subgen. Lycopersicon</taxon>
    </lineage>
</organism>
<evidence type="ECO:0000255" key="1">
    <source>
        <dbReference type="PROSITE-ProRule" id="PRU00366"/>
    </source>
</evidence>
<evidence type="ECO:0000256" key="2">
    <source>
        <dbReference type="SAM" id="MobiDB-lite"/>
    </source>
</evidence>
<evidence type="ECO:0000269" key="3">
    <source>
    </source>
</evidence>
<name>PTI6_SOLLC</name>
<feature type="chain" id="PRO_0000112568" description="Pathogenesis-related genes transcriptional activator PTI6">
    <location>
        <begin position="1"/>
        <end position="248"/>
    </location>
</feature>
<feature type="DNA-binding region" description="AP2/ERF" evidence="1">
    <location>
        <begin position="97"/>
        <end position="154"/>
    </location>
</feature>
<feature type="region of interest" description="Disordered" evidence="2">
    <location>
        <begin position="74"/>
        <end position="95"/>
    </location>
</feature>
<feature type="short sequence motif" description="Nuclear localization signal">
    <location>
        <begin position="81"/>
        <end position="97"/>
    </location>
</feature>
<proteinExistence type="evidence at transcript level"/>
<keyword id="KW-0010">Activator</keyword>
<keyword id="KW-0238">DNA-binding</keyword>
<keyword id="KW-0539">Nucleus</keyword>
<keyword id="KW-0611">Plant defense</keyword>
<keyword id="KW-1185">Reference proteome</keyword>
<keyword id="KW-0804">Transcription</keyword>
<keyword id="KW-0805">Transcription regulation</keyword>
<accession>O04682</accession>
<reference key="1">
    <citation type="journal article" date="1997" name="EMBO J.">
        <title>The Pto kinase conferring resistance to tomato bacterial speck disease interacts with proteins that bind a cis-element of pathogenesis-related genes.</title>
        <authorList>
            <person name="Zhou J.-M."/>
            <person name="Tang X."/>
            <person name="Martin G.B."/>
        </authorList>
    </citation>
    <scope>NUCLEOTIDE SEQUENCE [MRNA]</scope>
    <source>
        <strain>cv. Rio Grande</strain>
    </source>
</reference>
<reference key="2">
    <citation type="journal article" date="2002" name="Plant Cell">
        <title>Tomato transcription factors pti4, pti5, and pti6 activate defense responses when expressed in Arabidopsis.</title>
        <authorList>
            <person name="Gu Y.-Q."/>
            <person name="Wildermuth M.C."/>
            <person name="Chakravarthy S."/>
            <person name="Loh Y.-T."/>
            <person name="Yang C."/>
            <person name="He X."/>
            <person name="Han Y."/>
            <person name="Martin G.B."/>
        </authorList>
    </citation>
    <scope>FUNCTION</scope>
    <scope>SUBCELLULAR LOCATION</scope>
    <scope>DOMAIN</scope>
</reference>
<comment type="function">
    <text evidence="3">Acts as a transcriptional activator. Binds to the GCC-box pathogenesis-related promoter element. Activates the defense genes of plants.</text>
</comment>
<comment type="subunit">
    <text>Interacts with the Pto kinase.</text>
</comment>
<comment type="subcellular location">
    <subcellularLocation>
        <location evidence="1 3">Nucleus</location>
    </subcellularLocation>
</comment>
<gene>
    <name type="primary">PTI6</name>
</gene>
<sequence length="248" mass="27913">MTENSVPVIKFTQHIVTTNKHVFSEHNEKSNSELQRVVRIILTDADATDSSDDEGRNTVRRVKRHVTEINLMPSTKSIGDRKRRSVSPDSDVTRRKKFRGVRQRPWGRWAAEIRDPTRGKRVWLGTYDTPEEAAVVYDKAAVKLKGPDAVTNFPVSTTAEVTVTVTETETESVADGGDKSENDVALSPTSVLCDNDFAPFDNLGFCEVDAFGFDVDSLFRLPDFAMTEKYYGDEFGEFDFDDFALEAR</sequence>